<comment type="function">
    <text evidence="1">Involved in unsaturated fatty acids biosynthesis. Catalyzes the dehydration of short chain beta-hydroxyacyl-ACPs and long chain saturated and unsaturated beta-hydroxyacyl-ACPs.</text>
</comment>
<comment type="catalytic activity">
    <reaction evidence="1">
        <text>a (3R)-hydroxyacyl-[ACP] = a (2E)-enoyl-[ACP] + H2O</text>
        <dbReference type="Rhea" id="RHEA:13097"/>
        <dbReference type="Rhea" id="RHEA-COMP:9925"/>
        <dbReference type="Rhea" id="RHEA-COMP:9945"/>
        <dbReference type="ChEBI" id="CHEBI:15377"/>
        <dbReference type="ChEBI" id="CHEBI:78784"/>
        <dbReference type="ChEBI" id="CHEBI:78827"/>
        <dbReference type="EC" id="4.2.1.59"/>
    </reaction>
</comment>
<comment type="subcellular location">
    <subcellularLocation>
        <location evidence="1">Cytoplasm</location>
    </subcellularLocation>
</comment>
<comment type="similarity">
    <text evidence="1">Belongs to the thioester dehydratase family. FabZ subfamily.</text>
</comment>
<reference key="1">
    <citation type="journal article" date="2010" name="Genome Biol. Evol.">
        <title>Continuing evolution of Burkholderia mallei through genome reduction and large-scale rearrangements.</title>
        <authorList>
            <person name="Losada L."/>
            <person name="Ronning C.M."/>
            <person name="DeShazer D."/>
            <person name="Woods D."/>
            <person name="Fedorova N."/>
            <person name="Kim H.S."/>
            <person name="Shabalina S.A."/>
            <person name="Pearson T.R."/>
            <person name="Brinkac L."/>
            <person name="Tan P."/>
            <person name="Nandi T."/>
            <person name="Crabtree J."/>
            <person name="Badger J."/>
            <person name="Beckstrom-Sternberg S."/>
            <person name="Saqib M."/>
            <person name="Schutzer S.E."/>
            <person name="Keim P."/>
            <person name="Nierman W.C."/>
        </authorList>
    </citation>
    <scope>NUCLEOTIDE SEQUENCE [LARGE SCALE GENOMIC DNA]</scope>
    <source>
        <strain>NCTC 10229</strain>
    </source>
</reference>
<evidence type="ECO:0000255" key="1">
    <source>
        <dbReference type="HAMAP-Rule" id="MF_00406"/>
    </source>
</evidence>
<sequence length="155" mass="17412">MSTEKINFDIHKILTLLPHRYPILLVDRVLELEPHKAIKALKNVTVNEPFFTGHFPKRPVMPGVLIIEALAQAAALLTFAEAQPKDPENTLYYFVGIDNARFKRVVEPGDQLILNVTFERYIRGIWKFKAVAEVDGKVAAEAELMCTVKTADAAP</sequence>
<gene>
    <name evidence="1" type="primary">fabZ</name>
    <name type="ordered locus">BMA10229_A3267</name>
</gene>
<feature type="chain" id="PRO_1000049836" description="3-hydroxyacyl-[acyl-carrier-protein] dehydratase FabZ">
    <location>
        <begin position="1"/>
        <end position="155"/>
    </location>
</feature>
<feature type="active site" evidence="1">
    <location>
        <position position="54"/>
    </location>
</feature>
<keyword id="KW-0963">Cytoplasm</keyword>
<keyword id="KW-0441">Lipid A biosynthesis</keyword>
<keyword id="KW-0444">Lipid biosynthesis</keyword>
<keyword id="KW-0443">Lipid metabolism</keyword>
<keyword id="KW-0456">Lyase</keyword>
<protein>
    <recommendedName>
        <fullName evidence="1">3-hydroxyacyl-[acyl-carrier-protein] dehydratase FabZ</fullName>
        <ecNumber evidence="1">4.2.1.59</ecNumber>
    </recommendedName>
    <alternativeName>
        <fullName evidence="1">(3R)-hydroxymyristoyl-[acyl-carrier-protein] dehydratase</fullName>
        <shortName evidence="1">(3R)-hydroxymyristoyl-ACP dehydrase</shortName>
    </alternativeName>
    <alternativeName>
        <fullName evidence="1">Beta-hydroxyacyl-ACP dehydratase</fullName>
    </alternativeName>
</protein>
<name>FABZ_BURM9</name>
<accession>A2SB84</accession>
<dbReference type="EC" id="4.2.1.59" evidence="1"/>
<dbReference type="EMBL" id="CP000546">
    <property type="protein sequence ID" value="ABN03408.1"/>
    <property type="molecule type" value="Genomic_DNA"/>
</dbReference>
<dbReference type="RefSeq" id="WP_004192266.1">
    <property type="nucleotide sequence ID" value="NC_008836.1"/>
</dbReference>
<dbReference type="SMR" id="A2SB84"/>
<dbReference type="GeneID" id="93060689"/>
<dbReference type="KEGG" id="bml:BMA10229_A3267"/>
<dbReference type="HOGENOM" id="CLU_078912_1_0_4"/>
<dbReference type="Proteomes" id="UP000002283">
    <property type="component" value="Chromosome I"/>
</dbReference>
<dbReference type="GO" id="GO:0005737">
    <property type="term" value="C:cytoplasm"/>
    <property type="evidence" value="ECO:0007669"/>
    <property type="project" value="UniProtKB-SubCell"/>
</dbReference>
<dbReference type="GO" id="GO:0016020">
    <property type="term" value="C:membrane"/>
    <property type="evidence" value="ECO:0007669"/>
    <property type="project" value="GOC"/>
</dbReference>
<dbReference type="GO" id="GO:0019171">
    <property type="term" value="F:(3R)-hydroxyacyl-[acyl-carrier-protein] dehydratase activity"/>
    <property type="evidence" value="ECO:0007669"/>
    <property type="project" value="UniProtKB-EC"/>
</dbReference>
<dbReference type="GO" id="GO:0006633">
    <property type="term" value="P:fatty acid biosynthetic process"/>
    <property type="evidence" value="ECO:0007669"/>
    <property type="project" value="UniProtKB-UniRule"/>
</dbReference>
<dbReference type="GO" id="GO:0009245">
    <property type="term" value="P:lipid A biosynthetic process"/>
    <property type="evidence" value="ECO:0007669"/>
    <property type="project" value="UniProtKB-UniRule"/>
</dbReference>
<dbReference type="CDD" id="cd01288">
    <property type="entry name" value="FabZ"/>
    <property type="match status" value="1"/>
</dbReference>
<dbReference type="FunFam" id="3.10.129.10:FF:000001">
    <property type="entry name" value="3-hydroxyacyl-[acyl-carrier-protein] dehydratase FabZ"/>
    <property type="match status" value="1"/>
</dbReference>
<dbReference type="Gene3D" id="3.10.129.10">
    <property type="entry name" value="Hotdog Thioesterase"/>
    <property type="match status" value="1"/>
</dbReference>
<dbReference type="HAMAP" id="MF_00406">
    <property type="entry name" value="FabZ"/>
    <property type="match status" value="1"/>
</dbReference>
<dbReference type="InterPro" id="IPR013114">
    <property type="entry name" value="FabA_FabZ"/>
</dbReference>
<dbReference type="InterPro" id="IPR010084">
    <property type="entry name" value="FabZ"/>
</dbReference>
<dbReference type="InterPro" id="IPR029069">
    <property type="entry name" value="HotDog_dom_sf"/>
</dbReference>
<dbReference type="NCBIfam" id="TIGR01750">
    <property type="entry name" value="fabZ"/>
    <property type="match status" value="1"/>
</dbReference>
<dbReference type="NCBIfam" id="NF000582">
    <property type="entry name" value="PRK00006.1"/>
    <property type="match status" value="1"/>
</dbReference>
<dbReference type="PANTHER" id="PTHR30272">
    <property type="entry name" value="3-HYDROXYACYL-[ACYL-CARRIER-PROTEIN] DEHYDRATASE"/>
    <property type="match status" value="1"/>
</dbReference>
<dbReference type="PANTHER" id="PTHR30272:SF1">
    <property type="entry name" value="3-HYDROXYACYL-[ACYL-CARRIER-PROTEIN] DEHYDRATASE"/>
    <property type="match status" value="1"/>
</dbReference>
<dbReference type="Pfam" id="PF07977">
    <property type="entry name" value="FabA"/>
    <property type="match status" value="1"/>
</dbReference>
<dbReference type="SUPFAM" id="SSF54637">
    <property type="entry name" value="Thioesterase/thiol ester dehydrase-isomerase"/>
    <property type="match status" value="1"/>
</dbReference>
<proteinExistence type="inferred from homology"/>
<organism>
    <name type="scientific">Burkholderia mallei (strain NCTC 10229)</name>
    <dbReference type="NCBI Taxonomy" id="412022"/>
    <lineage>
        <taxon>Bacteria</taxon>
        <taxon>Pseudomonadati</taxon>
        <taxon>Pseudomonadota</taxon>
        <taxon>Betaproteobacteria</taxon>
        <taxon>Burkholderiales</taxon>
        <taxon>Burkholderiaceae</taxon>
        <taxon>Burkholderia</taxon>
        <taxon>pseudomallei group</taxon>
    </lineage>
</organism>